<gene>
    <name type="primary">EXPA22</name>
    <name type="synonym">EXP22</name>
    <name type="ordered locus">At5g39270</name>
    <name type="ORF">K3K3.18</name>
    <name type="ORF">K3K3_120</name>
</gene>
<dbReference type="EMBL" id="AB010694">
    <property type="protein sequence ID" value="BAB09382.1"/>
    <property type="status" value="ALT_INIT"/>
    <property type="molecule type" value="Genomic_DNA"/>
</dbReference>
<dbReference type="EMBL" id="CP002688">
    <property type="protein sequence ID" value="AED94414.2"/>
    <property type="molecule type" value="Genomic_DNA"/>
</dbReference>
<dbReference type="EMBL" id="DQ447015">
    <property type="protein sequence ID" value="ABE66202.1"/>
    <property type="molecule type" value="mRNA"/>
</dbReference>
<dbReference type="RefSeq" id="NP_198743.3">
    <property type="nucleotide sequence ID" value="NM_123289.3"/>
</dbReference>
<dbReference type="SMR" id="Q9FL80"/>
<dbReference type="STRING" id="3702.Q9FL80"/>
<dbReference type="PaxDb" id="3702-AT5G39270.1"/>
<dbReference type="ProteomicsDB" id="221819"/>
<dbReference type="EnsemblPlants" id="AT5G39270.1">
    <property type="protein sequence ID" value="AT5G39270.1"/>
    <property type="gene ID" value="AT5G39270"/>
</dbReference>
<dbReference type="GeneID" id="833923"/>
<dbReference type="Gramene" id="AT5G39270.1">
    <property type="protein sequence ID" value="AT5G39270.1"/>
    <property type="gene ID" value="AT5G39270"/>
</dbReference>
<dbReference type="KEGG" id="ath:AT5G39270"/>
<dbReference type="Araport" id="AT5G39270"/>
<dbReference type="TAIR" id="AT5G39270">
    <property type="gene designation" value="EXPA22"/>
</dbReference>
<dbReference type="eggNOG" id="ENOG502QQNJ">
    <property type="taxonomic scope" value="Eukaryota"/>
</dbReference>
<dbReference type="HOGENOM" id="CLU_027462_0_1_1"/>
<dbReference type="InParanoid" id="Q9FL80"/>
<dbReference type="OMA" id="SWGQVWT"/>
<dbReference type="PRO" id="PR:Q9FL80"/>
<dbReference type="Proteomes" id="UP000006548">
    <property type="component" value="Chromosome 5"/>
</dbReference>
<dbReference type="ExpressionAtlas" id="Q9FL80">
    <property type="expression patterns" value="baseline and differential"/>
</dbReference>
<dbReference type="GO" id="GO:0005576">
    <property type="term" value="C:extracellular region"/>
    <property type="evidence" value="ECO:0007669"/>
    <property type="project" value="UniProtKB-KW"/>
</dbReference>
<dbReference type="GO" id="GO:0016020">
    <property type="term" value="C:membrane"/>
    <property type="evidence" value="ECO:0007669"/>
    <property type="project" value="UniProtKB-SubCell"/>
</dbReference>
<dbReference type="GO" id="GO:0009653">
    <property type="term" value="P:anatomical structure morphogenesis"/>
    <property type="evidence" value="ECO:0007669"/>
    <property type="project" value="UniProtKB-ARBA"/>
</dbReference>
<dbReference type="GO" id="GO:0009828">
    <property type="term" value="P:plant-type cell wall loosening"/>
    <property type="evidence" value="ECO:0000250"/>
    <property type="project" value="UniProtKB"/>
</dbReference>
<dbReference type="CDD" id="cd22274">
    <property type="entry name" value="DPBB_EXPA_N"/>
    <property type="match status" value="1"/>
</dbReference>
<dbReference type="Gene3D" id="2.60.40.760">
    <property type="entry name" value="Expansin, cellulose-binding-like domain"/>
    <property type="match status" value="1"/>
</dbReference>
<dbReference type="Gene3D" id="2.40.40.10">
    <property type="entry name" value="RlpA-like domain"/>
    <property type="match status" value="1"/>
</dbReference>
<dbReference type="InterPro" id="IPR007118">
    <property type="entry name" value="Expan_Lol_pI"/>
</dbReference>
<dbReference type="InterPro" id="IPR002963">
    <property type="entry name" value="Expansin"/>
</dbReference>
<dbReference type="InterPro" id="IPR007112">
    <property type="entry name" value="Expansin/allergen_DPBB_dom"/>
</dbReference>
<dbReference type="InterPro" id="IPR007117">
    <property type="entry name" value="Expansin_CBD"/>
</dbReference>
<dbReference type="InterPro" id="IPR036749">
    <property type="entry name" value="Expansin_CBD_sf"/>
</dbReference>
<dbReference type="InterPro" id="IPR009009">
    <property type="entry name" value="RlpA-like_DPBB"/>
</dbReference>
<dbReference type="InterPro" id="IPR036908">
    <property type="entry name" value="RlpA-like_sf"/>
</dbReference>
<dbReference type="PANTHER" id="PTHR31867">
    <property type="entry name" value="EXPANSIN-A15"/>
    <property type="match status" value="1"/>
</dbReference>
<dbReference type="Pfam" id="PF03330">
    <property type="entry name" value="DPBB_1"/>
    <property type="match status" value="1"/>
</dbReference>
<dbReference type="Pfam" id="PF01357">
    <property type="entry name" value="Expansin_C"/>
    <property type="match status" value="1"/>
</dbReference>
<dbReference type="PRINTS" id="PR01226">
    <property type="entry name" value="EXPANSIN"/>
</dbReference>
<dbReference type="PRINTS" id="PR01225">
    <property type="entry name" value="EXPANSNFAMLY"/>
</dbReference>
<dbReference type="SMART" id="SM00837">
    <property type="entry name" value="DPBB_1"/>
    <property type="match status" value="1"/>
</dbReference>
<dbReference type="SUPFAM" id="SSF50685">
    <property type="entry name" value="Barwin-like endoglucanases"/>
    <property type="match status" value="1"/>
</dbReference>
<dbReference type="SUPFAM" id="SSF49590">
    <property type="entry name" value="PHL pollen allergen"/>
    <property type="match status" value="1"/>
</dbReference>
<dbReference type="PROSITE" id="PS50843">
    <property type="entry name" value="EXPANSIN_CBD"/>
    <property type="match status" value="1"/>
</dbReference>
<dbReference type="PROSITE" id="PS50842">
    <property type="entry name" value="EXPANSIN_EG45"/>
    <property type="match status" value="1"/>
</dbReference>
<protein>
    <recommendedName>
        <fullName>Expansin-A22</fullName>
        <shortName>AtEXPA22</shortName>
    </recommendedName>
    <alternativeName>
        <fullName>Alpha-expansin-22</fullName>
        <shortName>At-EXP22</shortName>
        <shortName>AtEx22</shortName>
    </alternativeName>
    <alternativeName>
        <fullName>Ath-ExpAlpha-1.15</fullName>
    </alternativeName>
</protein>
<reference key="1">
    <citation type="journal article" date="1998" name="DNA Res.">
        <title>Structural analysis of Arabidopsis thaliana chromosome 5. V. Sequence features of the regions of 1,381,565 bp covered by twenty one physically assigned P1 and TAC clones.</title>
        <authorList>
            <person name="Kaneko T."/>
            <person name="Kotani H."/>
            <person name="Nakamura Y."/>
            <person name="Sato S."/>
            <person name="Asamizu E."/>
            <person name="Miyajima N."/>
            <person name="Tabata S."/>
        </authorList>
    </citation>
    <scope>NUCLEOTIDE SEQUENCE [LARGE SCALE GENOMIC DNA]</scope>
    <source>
        <strain>cv. Columbia</strain>
    </source>
</reference>
<reference key="2">
    <citation type="journal article" date="2017" name="Plant J.">
        <title>Araport11: a complete reannotation of the Arabidopsis thaliana reference genome.</title>
        <authorList>
            <person name="Cheng C.Y."/>
            <person name="Krishnakumar V."/>
            <person name="Chan A.P."/>
            <person name="Thibaud-Nissen F."/>
            <person name="Schobel S."/>
            <person name="Town C.D."/>
        </authorList>
    </citation>
    <scope>GENOME REANNOTATION</scope>
    <source>
        <strain>cv. Columbia</strain>
    </source>
</reference>
<reference key="3">
    <citation type="submission" date="2006-03" db="EMBL/GenBank/DDBJ databases">
        <authorList>
            <person name="Underwood B.A."/>
            <person name="Xiao Y.-L."/>
            <person name="Moskal W.A. Jr."/>
            <person name="Monaghan E.L."/>
            <person name="Wang W."/>
            <person name="Redman J.C."/>
            <person name="Wu H.C."/>
            <person name="Utterback T."/>
            <person name="Town C.D."/>
        </authorList>
    </citation>
    <scope>NUCLEOTIDE SEQUENCE [LARGE SCALE MRNA] OF 17-279</scope>
    <source>
        <strain>cv. Columbia</strain>
    </source>
</reference>
<reference key="4">
    <citation type="journal article" date="2004" name="Plant Mol. Biol.">
        <title>Nomenclature for members of the expansin superfamily of genes and proteins.</title>
        <authorList>
            <person name="Kende H."/>
            <person name="Bradford K.J."/>
            <person name="Brummell D.A."/>
            <person name="Cho H.-T."/>
            <person name="Cosgrove D.J."/>
            <person name="Fleming A.J."/>
            <person name="Gehring C."/>
            <person name="Lee Y."/>
            <person name="McQueen-Mason S.J."/>
            <person name="Rose J.K.C."/>
            <person name="Voesenek L.A.C."/>
        </authorList>
    </citation>
    <scope>NOMENCLATURE</scope>
</reference>
<name>EXP22_ARATH</name>
<evidence type="ECO:0000250" key="1"/>
<evidence type="ECO:0000255" key="2"/>
<evidence type="ECO:0000255" key="3">
    <source>
        <dbReference type="PROSITE-ProRule" id="PRU00078"/>
    </source>
</evidence>
<evidence type="ECO:0000255" key="4">
    <source>
        <dbReference type="PROSITE-ProRule" id="PRU00079"/>
    </source>
</evidence>
<evidence type="ECO:0000305" key="5"/>
<proteinExistence type="evidence at transcript level"/>
<feature type="signal peptide" evidence="2">
    <location>
        <begin position="1"/>
        <end position="27"/>
    </location>
</feature>
<feature type="chain" id="PRO_0000008702" description="Expansin-A22">
    <location>
        <begin position="28"/>
        <end position="279"/>
    </location>
</feature>
<feature type="domain" description="Expansin-like EG45" evidence="4">
    <location>
        <begin position="76"/>
        <end position="186"/>
    </location>
</feature>
<feature type="domain" description="Expansin-like CBD" evidence="3">
    <location>
        <begin position="196"/>
        <end position="275"/>
    </location>
</feature>
<sequence>MKLLEKMIYVEFLMIIMVIWVVPMSYGHGAMIGNAVEAPDVAEAPGINDPSKALDTNWYDARATFYGDIHGGDTQQGACGYGNLFRQGYGLATAALSTALFNDGYTCGACYEIMCTRDPQWCLPGSVKITATNFCPANYSKTTDLWCNPPQKHFDLSLAMFLKIAKYKAGVVPVRYRRIPCSKTGGVKFETKGNPYFLMVLIYNVGGAGDIKYVQVKGNKTGWITMKKNWGQNWTTITVLTGQGLSFRVTTSDGITKDFWNVMPKNWGFGQTFDGRINF</sequence>
<organism>
    <name type="scientific">Arabidopsis thaliana</name>
    <name type="common">Mouse-ear cress</name>
    <dbReference type="NCBI Taxonomy" id="3702"/>
    <lineage>
        <taxon>Eukaryota</taxon>
        <taxon>Viridiplantae</taxon>
        <taxon>Streptophyta</taxon>
        <taxon>Embryophyta</taxon>
        <taxon>Tracheophyta</taxon>
        <taxon>Spermatophyta</taxon>
        <taxon>Magnoliopsida</taxon>
        <taxon>eudicotyledons</taxon>
        <taxon>Gunneridae</taxon>
        <taxon>Pentapetalae</taxon>
        <taxon>rosids</taxon>
        <taxon>malvids</taxon>
        <taxon>Brassicales</taxon>
        <taxon>Brassicaceae</taxon>
        <taxon>Camelineae</taxon>
        <taxon>Arabidopsis</taxon>
    </lineage>
</organism>
<accession>Q9FL80</accession>
<accession>F4KD30</accession>
<accession>Q1PDQ3</accession>
<comment type="function">
    <text evidence="1">Causes loosening and extension of plant cell walls by disrupting non-covalent bonding between cellulose microfibrils and matrix glucans. No enzymatic activity has been found (By similarity).</text>
</comment>
<comment type="subcellular location">
    <subcellularLocation>
        <location>Secreted</location>
        <location>Cell wall</location>
    </subcellularLocation>
    <subcellularLocation>
        <location>Membrane</location>
        <topology>Peripheral membrane protein</topology>
    </subcellularLocation>
</comment>
<comment type="similarity">
    <text evidence="5">Belongs to the expansin family. Expansin A subfamily.</text>
</comment>
<comment type="sequence caution" evidence="5">
    <conflict type="erroneous initiation">
        <sequence resource="EMBL-CDS" id="BAB09382"/>
    </conflict>
    <text>Truncated N-terminus.</text>
</comment>
<comment type="online information" name="EXPANSIN homepage">
    <link uri="https://www.dept.psu.edu/biology/groups/expansins/index.htm"/>
</comment>
<keyword id="KW-0134">Cell wall</keyword>
<keyword id="KW-0961">Cell wall biogenesis/degradation</keyword>
<keyword id="KW-0472">Membrane</keyword>
<keyword id="KW-1185">Reference proteome</keyword>
<keyword id="KW-0964">Secreted</keyword>
<keyword id="KW-0732">Signal</keyword>